<feature type="chain" id="PRO_0000427208" description="Trehalose-6-phosphate synthase">
    <location>
        <begin position="1"/>
        <end position="500"/>
    </location>
</feature>
<feature type="binding site" evidence="1">
    <location>
        <position position="28"/>
    </location>
    <ligand>
        <name>D-glucose 6-phosphate</name>
        <dbReference type="ChEBI" id="CHEBI:61548"/>
    </ligand>
</feature>
<feature type="binding site" evidence="1">
    <location>
        <begin position="48"/>
        <end position="49"/>
    </location>
    <ligand>
        <name>UDP-alpha-D-glucose</name>
        <dbReference type="ChEBI" id="CHEBI:58885"/>
    </ligand>
</feature>
<feature type="binding site" evidence="1">
    <location>
        <position position="108"/>
    </location>
    <ligand>
        <name>D-glucose 6-phosphate</name>
        <dbReference type="ChEBI" id="CHEBI:61548"/>
    </ligand>
</feature>
<feature type="binding site" evidence="1">
    <location>
        <position position="162"/>
    </location>
    <ligand>
        <name>D-glucose 6-phosphate</name>
        <dbReference type="ChEBI" id="CHEBI:61548"/>
    </ligand>
</feature>
<feature type="binding site" evidence="1">
    <location>
        <position position="304"/>
    </location>
    <ligand>
        <name>UDP-alpha-D-glucose</name>
        <dbReference type="ChEBI" id="CHEBI:58885"/>
    </ligand>
</feature>
<feature type="binding site" evidence="1">
    <location>
        <position position="309"/>
    </location>
    <ligand>
        <name>UDP-alpha-D-glucose</name>
        <dbReference type="ChEBI" id="CHEBI:58885"/>
    </ligand>
</feature>
<feature type="binding site" evidence="1">
    <location>
        <position position="342"/>
    </location>
    <ligand>
        <name>D-glucose 6-phosphate</name>
        <dbReference type="ChEBI" id="CHEBI:61548"/>
    </ligand>
</feature>
<feature type="binding site" evidence="1">
    <location>
        <begin position="407"/>
        <end position="411"/>
    </location>
    <ligand>
        <name>UDP-alpha-D-glucose</name>
        <dbReference type="ChEBI" id="CHEBI:58885"/>
    </ligand>
</feature>
<feature type="site" description="Involved in alpha anomer selectivity" evidence="1">
    <location>
        <position position="117"/>
    </location>
</feature>
<feature type="site" description="Involved in alpha anomer selectivity" evidence="1">
    <location>
        <position position="187"/>
    </location>
</feature>
<proteinExistence type="inferred from homology"/>
<sequence>MAPSGGQEAQICDSETFGDSDFVVVANRLPVDLERLPDGSTTWKRSPGGLVTALEPVLRRRRGAWVGWPGVNDDGAEPDLHVLDGPIIQDELELHPVRLSTTDIAQYYEGFSNATLWPLYHDVIVKPLYHREWWDRYVDVNQRFAEAASRAAAHGATVWVQDYQLQLVPKMLRMLRPDLTIGFFLHIPFPPVELFMQMPWRTEIIQGLLGADLVGFHLPGGAQNFLILSRRLVGTDTSRGTVGVRSRFGAAVLGSRTIRVGAFPISVDSGALDHAARDRNIRRRAREIRTELGNPRKILLGVDRLDYTKGIDVRLKAFSELLAEGRVKRDDTVVVQLATPSRERVESYQTLRNDIERQVGHINGEYGEVGHPVVHYLHRPAPRDELIAFFVASDVMLVTPLRDGMNLVAKEYVACRSDLGGALVLSEFTGAAAELRHAYLVNPHDLEGVKDGIEEALNQTEEAGRRRMRSLRRQVLAHDVDRWAQSFLDALAGAHPRGQG</sequence>
<dbReference type="EC" id="2.4.1.15" evidence="2"/>
<dbReference type="EC" id="2.4.1.347" evidence="2"/>
<dbReference type="EMBL" id="AE000516">
    <property type="protein sequence ID" value="AAK47953.1"/>
    <property type="status" value="ALT_INIT"/>
    <property type="molecule type" value="Genomic_DNA"/>
</dbReference>
<dbReference type="PIR" id="G70569">
    <property type="entry name" value="G70569"/>
</dbReference>
<dbReference type="RefSeq" id="WP_003900868.1">
    <property type="nucleotide sequence ID" value="NZ_KK341227.1"/>
</dbReference>
<dbReference type="SMR" id="P9WN10"/>
<dbReference type="CAZy" id="GT20">
    <property type="family name" value="Glycosyltransferase Family 20"/>
</dbReference>
<dbReference type="KEGG" id="mtc:MT3594"/>
<dbReference type="PATRIC" id="fig|83331.31.peg.3871"/>
<dbReference type="HOGENOM" id="CLU_002351_7_1_11"/>
<dbReference type="UniPathway" id="UPA00299"/>
<dbReference type="Proteomes" id="UP000001020">
    <property type="component" value="Chromosome"/>
</dbReference>
<dbReference type="GO" id="GO:0005829">
    <property type="term" value="C:cytosol"/>
    <property type="evidence" value="ECO:0007669"/>
    <property type="project" value="TreeGrafter"/>
</dbReference>
<dbReference type="GO" id="GO:0047260">
    <property type="term" value="F:alpha,alpha-trehalose-phosphate synthase (GDP-forming) activity"/>
    <property type="evidence" value="ECO:0007669"/>
    <property type="project" value="RHEA"/>
</dbReference>
<dbReference type="GO" id="GO:0003825">
    <property type="term" value="F:alpha,alpha-trehalose-phosphate synthase (UDP-forming) activity"/>
    <property type="evidence" value="ECO:0007669"/>
    <property type="project" value="UniProtKB-EC"/>
</dbReference>
<dbReference type="GO" id="GO:0004805">
    <property type="term" value="F:trehalose-phosphatase activity"/>
    <property type="evidence" value="ECO:0007669"/>
    <property type="project" value="TreeGrafter"/>
</dbReference>
<dbReference type="GO" id="GO:0005992">
    <property type="term" value="P:trehalose biosynthetic process"/>
    <property type="evidence" value="ECO:0007669"/>
    <property type="project" value="UniProtKB-UniPathway"/>
</dbReference>
<dbReference type="CDD" id="cd03788">
    <property type="entry name" value="GT20_TPS"/>
    <property type="match status" value="1"/>
</dbReference>
<dbReference type="FunFam" id="3.40.50.2000:FF:000102">
    <property type="entry name" value="Trehalose-6-phosphate synthase"/>
    <property type="match status" value="1"/>
</dbReference>
<dbReference type="FunFam" id="3.40.50.2000:FF:000262">
    <property type="entry name" value="Trehalose-6-phosphate synthase"/>
    <property type="match status" value="1"/>
</dbReference>
<dbReference type="Gene3D" id="3.40.50.2000">
    <property type="entry name" value="Glycogen Phosphorylase B"/>
    <property type="match status" value="2"/>
</dbReference>
<dbReference type="InterPro" id="IPR001830">
    <property type="entry name" value="Glyco_trans_20"/>
</dbReference>
<dbReference type="PANTHER" id="PTHR10788:SF106">
    <property type="entry name" value="BCDNA.GH08860"/>
    <property type="match status" value="1"/>
</dbReference>
<dbReference type="PANTHER" id="PTHR10788">
    <property type="entry name" value="TREHALOSE-6-PHOSPHATE SYNTHASE"/>
    <property type="match status" value="1"/>
</dbReference>
<dbReference type="Pfam" id="PF00982">
    <property type="entry name" value="Glyco_transf_20"/>
    <property type="match status" value="1"/>
</dbReference>
<dbReference type="SUPFAM" id="SSF53756">
    <property type="entry name" value="UDP-Glycosyltransferase/glycogen phosphorylase"/>
    <property type="match status" value="1"/>
</dbReference>
<keyword id="KW-0328">Glycosyltransferase</keyword>
<keyword id="KW-1185">Reference proteome</keyword>
<keyword id="KW-0808">Transferase</keyword>
<gene>
    <name evidence="2" type="primary">otsA</name>
    <name type="ordered locus">MT3594</name>
</gene>
<name>OTSA_MYCTO</name>
<evidence type="ECO:0000250" key="1">
    <source>
        <dbReference type="UniProtKB" id="P31677"/>
    </source>
</evidence>
<evidence type="ECO:0000250" key="2">
    <source>
        <dbReference type="UniProtKB" id="P9WN11"/>
    </source>
</evidence>
<evidence type="ECO:0000305" key="3"/>
<protein>
    <recommendedName>
        <fullName evidence="2">Trehalose-6-phosphate synthase</fullName>
        <shortName evidence="2">TPS</shortName>
        <ecNumber evidence="2">2.4.1.15</ecNumber>
        <ecNumber evidence="2">2.4.1.347</ecNumber>
    </recommendedName>
    <alternativeName>
        <fullName evidence="2">Alpha,alpha-trehalose-phosphate synthase [UDP-forming]</fullName>
    </alternativeName>
    <alternativeName>
        <fullName evidence="1">Osmoregulatory trehalose synthesis protein A</fullName>
        <shortName evidence="1">OtsA</shortName>
    </alternativeName>
</protein>
<organism>
    <name type="scientific">Mycobacterium tuberculosis (strain CDC 1551 / Oshkosh)</name>
    <dbReference type="NCBI Taxonomy" id="83331"/>
    <lineage>
        <taxon>Bacteria</taxon>
        <taxon>Bacillati</taxon>
        <taxon>Actinomycetota</taxon>
        <taxon>Actinomycetes</taxon>
        <taxon>Mycobacteriales</taxon>
        <taxon>Mycobacteriaceae</taxon>
        <taxon>Mycobacterium</taxon>
        <taxon>Mycobacterium tuberculosis complex</taxon>
    </lineage>
</organism>
<accession>P9WN10</accession>
<accession>L0TE99</accession>
<accession>O06353</accession>
<accession>Q7D5F6</accession>
<comment type="function">
    <text evidence="2">Probably involved in the osmoprotection via the biosynthesis of trehalose and in the production of glycogen and alpha-glucan via the TreS-Pep2 branch involved in the biosynthesis of maltose-1-phosphate (M1P). Catalyzes the transfer of glucose from UDP-glucose (UDP-Glc) to D-glucose 6-phosphate (Glc-6-P) to form trehalose-6-phosphate. Probably also able to use ADP-Glc, CDP-Glc, GDP-Glc and TDP-Glc as glucosyl donors.</text>
</comment>
<comment type="catalytic activity">
    <reaction evidence="2">
        <text>ADP-alpha-D-glucose + D-glucose 6-phosphate = alpha,alpha-trehalose 6-phosphate + ADP + H(+)</text>
        <dbReference type="Rhea" id="RHEA:53880"/>
        <dbReference type="ChEBI" id="CHEBI:15378"/>
        <dbReference type="ChEBI" id="CHEBI:57498"/>
        <dbReference type="ChEBI" id="CHEBI:58429"/>
        <dbReference type="ChEBI" id="CHEBI:61548"/>
        <dbReference type="ChEBI" id="CHEBI:456216"/>
        <dbReference type="EC" id="2.4.1.347"/>
    </reaction>
</comment>
<comment type="catalytic activity">
    <reaction evidence="2">
        <text>CDP-alpha-D-glucose + D-glucose 6-phosphate = alpha,alpha-trehalose 6-phosphate + CDP + H(+)</text>
        <dbReference type="Rhea" id="RHEA:53884"/>
        <dbReference type="ChEBI" id="CHEBI:15378"/>
        <dbReference type="ChEBI" id="CHEBI:58069"/>
        <dbReference type="ChEBI" id="CHEBI:58429"/>
        <dbReference type="ChEBI" id="CHEBI:61548"/>
        <dbReference type="ChEBI" id="CHEBI:137927"/>
    </reaction>
</comment>
<comment type="catalytic activity">
    <reaction evidence="2">
        <text>GDP-alpha-D-glucose + D-glucose 6-phosphate = alpha,alpha-trehalose 6-phosphate + GDP + H(+)</text>
        <dbReference type="Rhea" id="RHEA:14605"/>
        <dbReference type="ChEBI" id="CHEBI:15378"/>
        <dbReference type="ChEBI" id="CHEBI:58189"/>
        <dbReference type="ChEBI" id="CHEBI:58429"/>
        <dbReference type="ChEBI" id="CHEBI:61548"/>
        <dbReference type="ChEBI" id="CHEBI:62230"/>
    </reaction>
</comment>
<comment type="catalytic activity">
    <reaction evidence="2">
        <text>TDP-alpha-D-glucose + D-glucose 6-phosphate = 5-methyl-UDP + alpha,alpha-trehalose 6-phosphate + H(+)</text>
        <dbReference type="Rhea" id="RHEA:53888"/>
        <dbReference type="ChEBI" id="CHEBI:15378"/>
        <dbReference type="ChEBI" id="CHEBI:58429"/>
        <dbReference type="ChEBI" id="CHEBI:61417"/>
        <dbReference type="ChEBI" id="CHEBI:61548"/>
        <dbReference type="ChEBI" id="CHEBI:137931"/>
    </reaction>
</comment>
<comment type="catalytic activity">
    <reaction evidence="2">
        <text>D-glucose 6-phosphate + UDP-alpha-D-glucose = alpha,alpha-trehalose 6-phosphate + UDP + H(+)</text>
        <dbReference type="Rhea" id="RHEA:18889"/>
        <dbReference type="ChEBI" id="CHEBI:15378"/>
        <dbReference type="ChEBI" id="CHEBI:58223"/>
        <dbReference type="ChEBI" id="CHEBI:58429"/>
        <dbReference type="ChEBI" id="CHEBI:58885"/>
        <dbReference type="ChEBI" id="CHEBI:61548"/>
        <dbReference type="EC" id="2.4.1.15"/>
    </reaction>
</comment>
<comment type="pathway">
    <text evidence="2">Glycan biosynthesis; trehalose biosynthesis.</text>
</comment>
<comment type="subunit">
    <text evidence="2">Homotetramer.</text>
</comment>
<comment type="similarity">
    <text evidence="2">Belongs to the glycosyltransferase 20 family.</text>
</comment>
<comment type="sequence caution" evidence="3">
    <conflict type="erroneous initiation">
        <sequence resource="EMBL-CDS" id="AAK47953"/>
    </conflict>
</comment>
<reference key="1">
    <citation type="journal article" date="2002" name="J. Bacteriol.">
        <title>Whole-genome comparison of Mycobacterium tuberculosis clinical and laboratory strains.</title>
        <authorList>
            <person name="Fleischmann R.D."/>
            <person name="Alland D."/>
            <person name="Eisen J.A."/>
            <person name="Carpenter L."/>
            <person name="White O."/>
            <person name="Peterson J.D."/>
            <person name="DeBoy R.T."/>
            <person name="Dodson R.J."/>
            <person name="Gwinn M.L."/>
            <person name="Haft D.H."/>
            <person name="Hickey E.K."/>
            <person name="Kolonay J.F."/>
            <person name="Nelson W.C."/>
            <person name="Umayam L.A."/>
            <person name="Ermolaeva M.D."/>
            <person name="Salzberg S.L."/>
            <person name="Delcher A."/>
            <person name="Utterback T.R."/>
            <person name="Weidman J.F."/>
            <person name="Khouri H.M."/>
            <person name="Gill J."/>
            <person name="Mikula A."/>
            <person name="Bishai W."/>
            <person name="Jacobs W.R. Jr."/>
            <person name="Venter J.C."/>
            <person name="Fraser C.M."/>
        </authorList>
    </citation>
    <scope>NUCLEOTIDE SEQUENCE [LARGE SCALE GENOMIC DNA]</scope>
    <source>
        <strain>CDC 1551 / Oshkosh</strain>
    </source>
</reference>